<comment type="function">
    <text evidence="2">Cell wall formation.</text>
</comment>
<comment type="catalytic activity">
    <reaction evidence="2">
        <text>2 D-alanine + ATP = D-alanyl-D-alanine + ADP + phosphate + H(+)</text>
        <dbReference type="Rhea" id="RHEA:11224"/>
        <dbReference type="ChEBI" id="CHEBI:15378"/>
        <dbReference type="ChEBI" id="CHEBI:30616"/>
        <dbReference type="ChEBI" id="CHEBI:43474"/>
        <dbReference type="ChEBI" id="CHEBI:57416"/>
        <dbReference type="ChEBI" id="CHEBI:57822"/>
        <dbReference type="ChEBI" id="CHEBI:456216"/>
        <dbReference type="EC" id="6.3.2.4"/>
    </reaction>
</comment>
<comment type="cofactor">
    <cofactor evidence="1">
        <name>Mg(2+)</name>
        <dbReference type="ChEBI" id="CHEBI:18420"/>
    </cofactor>
    <cofactor evidence="1">
        <name>Mn(2+)</name>
        <dbReference type="ChEBI" id="CHEBI:29035"/>
    </cofactor>
    <text evidence="1">Binds 2 magnesium or manganese ions per subunit.</text>
</comment>
<comment type="pathway">
    <text evidence="2">Cell wall biogenesis; peptidoglycan biosynthesis.</text>
</comment>
<comment type="subcellular location">
    <subcellularLocation>
        <location evidence="2">Cytoplasm</location>
    </subcellularLocation>
</comment>
<comment type="similarity">
    <text evidence="2">Belongs to the D-alanine--D-alanine ligase family.</text>
</comment>
<dbReference type="EC" id="6.3.2.4" evidence="2"/>
<dbReference type="EMBL" id="CP001213">
    <property type="protein sequence ID" value="ACL28538.1"/>
    <property type="molecule type" value="Genomic_DNA"/>
</dbReference>
<dbReference type="RefSeq" id="WP_004268324.1">
    <property type="nucleotide sequence ID" value="NC_011835.1"/>
</dbReference>
<dbReference type="SMR" id="B8DVN7"/>
<dbReference type="STRING" id="442563.BLA_0236"/>
<dbReference type="KEGG" id="bla:BLA_0236"/>
<dbReference type="PATRIC" id="fig|442563.4.peg.251"/>
<dbReference type="HOGENOM" id="CLU_039268_0_1_11"/>
<dbReference type="UniPathway" id="UPA00219"/>
<dbReference type="Proteomes" id="UP000002456">
    <property type="component" value="Chromosome"/>
</dbReference>
<dbReference type="GO" id="GO:0005829">
    <property type="term" value="C:cytosol"/>
    <property type="evidence" value="ECO:0007669"/>
    <property type="project" value="TreeGrafter"/>
</dbReference>
<dbReference type="GO" id="GO:0005524">
    <property type="term" value="F:ATP binding"/>
    <property type="evidence" value="ECO:0007669"/>
    <property type="project" value="UniProtKB-KW"/>
</dbReference>
<dbReference type="GO" id="GO:0008716">
    <property type="term" value="F:D-alanine-D-alanine ligase activity"/>
    <property type="evidence" value="ECO:0007669"/>
    <property type="project" value="UniProtKB-UniRule"/>
</dbReference>
<dbReference type="GO" id="GO:0046872">
    <property type="term" value="F:metal ion binding"/>
    <property type="evidence" value="ECO:0007669"/>
    <property type="project" value="UniProtKB-KW"/>
</dbReference>
<dbReference type="GO" id="GO:0071555">
    <property type="term" value="P:cell wall organization"/>
    <property type="evidence" value="ECO:0007669"/>
    <property type="project" value="UniProtKB-KW"/>
</dbReference>
<dbReference type="GO" id="GO:0009252">
    <property type="term" value="P:peptidoglycan biosynthetic process"/>
    <property type="evidence" value="ECO:0007669"/>
    <property type="project" value="UniProtKB-UniRule"/>
</dbReference>
<dbReference type="GO" id="GO:0008360">
    <property type="term" value="P:regulation of cell shape"/>
    <property type="evidence" value="ECO:0007669"/>
    <property type="project" value="UniProtKB-KW"/>
</dbReference>
<dbReference type="Gene3D" id="3.40.50.20">
    <property type="match status" value="1"/>
</dbReference>
<dbReference type="Gene3D" id="3.30.1490.20">
    <property type="entry name" value="ATP-grasp fold, A domain"/>
    <property type="match status" value="1"/>
</dbReference>
<dbReference type="Gene3D" id="3.30.470.20">
    <property type="entry name" value="ATP-grasp fold, B domain"/>
    <property type="match status" value="1"/>
</dbReference>
<dbReference type="HAMAP" id="MF_00047">
    <property type="entry name" value="Dala_Dala_lig"/>
    <property type="match status" value="1"/>
</dbReference>
<dbReference type="InterPro" id="IPR011761">
    <property type="entry name" value="ATP-grasp"/>
</dbReference>
<dbReference type="InterPro" id="IPR013815">
    <property type="entry name" value="ATP_grasp_subdomain_1"/>
</dbReference>
<dbReference type="InterPro" id="IPR000291">
    <property type="entry name" value="D-Ala_lig_Van_CS"/>
</dbReference>
<dbReference type="InterPro" id="IPR005905">
    <property type="entry name" value="D_ala_D_ala"/>
</dbReference>
<dbReference type="InterPro" id="IPR011095">
    <property type="entry name" value="Dala_Dala_lig_C"/>
</dbReference>
<dbReference type="InterPro" id="IPR011127">
    <property type="entry name" value="Dala_Dala_lig_N"/>
</dbReference>
<dbReference type="InterPro" id="IPR016185">
    <property type="entry name" value="PreATP-grasp_dom_sf"/>
</dbReference>
<dbReference type="NCBIfam" id="TIGR01205">
    <property type="entry name" value="D_ala_D_alaTIGR"/>
    <property type="match status" value="1"/>
</dbReference>
<dbReference type="NCBIfam" id="NF002528">
    <property type="entry name" value="PRK01966.1-4"/>
    <property type="match status" value="1"/>
</dbReference>
<dbReference type="PANTHER" id="PTHR23132">
    <property type="entry name" value="D-ALANINE--D-ALANINE LIGASE"/>
    <property type="match status" value="1"/>
</dbReference>
<dbReference type="PANTHER" id="PTHR23132:SF25">
    <property type="entry name" value="D-ALANINE--D-ALANINE LIGASE A"/>
    <property type="match status" value="1"/>
</dbReference>
<dbReference type="Pfam" id="PF07478">
    <property type="entry name" value="Dala_Dala_lig_C"/>
    <property type="match status" value="1"/>
</dbReference>
<dbReference type="Pfam" id="PF01820">
    <property type="entry name" value="Dala_Dala_lig_N"/>
    <property type="match status" value="1"/>
</dbReference>
<dbReference type="PIRSF" id="PIRSF039102">
    <property type="entry name" value="Ddl/VanB"/>
    <property type="match status" value="1"/>
</dbReference>
<dbReference type="SUPFAM" id="SSF56059">
    <property type="entry name" value="Glutathione synthetase ATP-binding domain-like"/>
    <property type="match status" value="1"/>
</dbReference>
<dbReference type="SUPFAM" id="SSF52440">
    <property type="entry name" value="PreATP-grasp domain"/>
    <property type="match status" value="1"/>
</dbReference>
<dbReference type="PROSITE" id="PS50975">
    <property type="entry name" value="ATP_GRASP"/>
    <property type="match status" value="1"/>
</dbReference>
<dbReference type="PROSITE" id="PS00843">
    <property type="entry name" value="DALA_DALA_LIGASE_1"/>
    <property type="match status" value="1"/>
</dbReference>
<dbReference type="PROSITE" id="PS00844">
    <property type="entry name" value="DALA_DALA_LIGASE_2"/>
    <property type="match status" value="1"/>
</dbReference>
<reference key="1">
    <citation type="journal article" date="2009" name="J. Bacteriol.">
        <title>Genome sequence of the probiotic bacterium Bifidobacterium animalis subsp. lactis AD011.</title>
        <authorList>
            <person name="Kim J.F."/>
            <person name="Jeong H."/>
            <person name="Yu D.S."/>
            <person name="Choi S.-H."/>
            <person name="Hur C.-G."/>
            <person name="Park M.-S."/>
            <person name="Yoon S.H."/>
            <person name="Kim D.-W."/>
            <person name="Ji G.E."/>
            <person name="Park H.-S."/>
            <person name="Oh T.K."/>
        </authorList>
    </citation>
    <scope>NUCLEOTIDE SEQUENCE [LARGE SCALE GENOMIC DNA]</scope>
    <source>
        <strain>AD011</strain>
    </source>
</reference>
<organism>
    <name type="scientific">Bifidobacterium animalis subsp. lactis (strain AD011)</name>
    <dbReference type="NCBI Taxonomy" id="442563"/>
    <lineage>
        <taxon>Bacteria</taxon>
        <taxon>Bacillati</taxon>
        <taxon>Actinomycetota</taxon>
        <taxon>Actinomycetes</taxon>
        <taxon>Bifidobacteriales</taxon>
        <taxon>Bifidobacteriaceae</taxon>
        <taxon>Bifidobacterium</taxon>
    </lineage>
</organism>
<gene>
    <name evidence="2" type="primary">ddl</name>
    <name type="ordered locus">BLA_0236</name>
</gene>
<evidence type="ECO:0000250" key="1"/>
<evidence type="ECO:0000255" key="2">
    <source>
        <dbReference type="HAMAP-Rule" id="MF_00047"/>
    </source>
</evidence>
<accession>B8DVN7</accession>
<feature type="chain" id="PRO_1000117449" description="D-alanine--D-alanine ligase">
    <location>
        <begin position="1"/>
        <end position="378"/>
    </location>
</feature>
<feature type="domain" description="ATP-grasp" evidence="2">
    <location>
        <begin position="149"/>
        <end position="374"/>
    </location>
</feature>
<feature type="binding site" evidence="2">
    <location>
        <begin position="189"/>
        <end position="247"/>
    </location>
    <ligand>
        <name>ATP</name>
        <dbReference type="ChEBI" id="CHEBI:30616"/>
    </ligand>
</feature>
<feature type="binding site" evidence="2">
    <location>
        <position position="328"/>
    </location>
    <ligand>
        <name>Mg(2+)</name>
        <dbReference type="ChEBI" id="CHEBI:18420"/>
        <label>1</label>
    </ligand>
</feature>
<feature type="binding site" evidence="2">
    <location>
        <position position="341"/>
    </location>
    <ligand>
        <name>Mg(2+)</name>
        <dbReference type="ChEBI" id="CHEBI:18420"/>
        <label>1</label>
    </ligand>
</feature>
<feature type="binding site" evidence="2">
    <location>
        <position position="341"/>
    </location>
    <ligand>
        <name>Mg(2+)</name>
        <dbReference type="ChEBI" id="CHEBI:18420"/>
        <label>2</label>
    </ligand>
</feature>
<feature type="binding site" evidence="2">
    <location>
        <position position="343"/>
    </location>
    <ligand>
        <name>Mg(2+)</name>
        <dbReference type="ChEBI" id="CHEBI:18420"/>
        <label>2</label>
    </ligand>
</feature>
<sequence length="378" mass="40445">MAKTRVAVLYGGKADEHSISCISAASFMRALDPELFEAVPIGITKTGTWFVDGQDPLGWNLAEGLPEAVETPDSREVVLTIGDGGDGFHARNADGSLDSLGHIDVVLPALHGPFGEDGTIQGLFEMMGVPYVGCGVLASAACMDKHYTKVLLRAAGIPVAPGITLDTRHYDASDEFATDGEEFLRQVNEAGLQYPLFVKPSRAGSSFGVTKVEQIGDAAALAAAVFEASRHDWRVLVEQGIDAREIECAVVRIHPTDPTRAALPGEVVLDRRSEGDDQFYDFDSKYMDSQASHTEIPAKIGDDLIARVRETAVRAFDAVDGMGLSRVDTFVTADGDVLVNEINTLPGCTSISMFPQAWEAMGIPFRTVVTDLIEGALA</sequence>
<proteinExistence type="inferred from homology"/>
<keyword id="KW-0067">ATP-binding</keyword>
<keyword id="KW-0133">Cell shape</keyword>
<keyword id="KW-0961">Cell wall biogenesis/degradation</keyword>
<keyword id="KW-0963">Cytoplasm</keyword>
<keyword id="KW-0436">Ligase</keyword>
<keyword id="KW-0460">Magnesium</keyword>
<keyword id="KW-0464">Manganese</keyword>
<keyword id="KW-0479">Metal-binding</keyword>
<keyword id="KW-0547">Nucleotide-binding</keyword>
<keyword id="KW-0573">Peptidoglycan synthesis</keyword>
<keyword id="KW-1185">Reference proteome</keyword>
<name>DDL_BIFA0</name>
<protein>
    <recommendedName>
        <fullName evidence="2">D-alanine--D-alanine ligase</fullName>
        <ecNumber evidence="2">6.3.2.4</ecNumber>
    </recommendedName>
    <alternativeName>
        <fullName evidence="2">D-Ala-D-Ala ligase</fullName>
    </alternativeName>
    <alternativeName>
        <fullName evidence="2">D-alanylalanine synthetase</fullName>
    </alternativeName>
</protein>